<accession>P35785</accession>
<reference key="1">
    <citation type="journal article" date="1993" name="J. Allergy Clin. Immunol.">
        <title>Allergens in Hymenoptera venom. XXV: the amino acid sequences of antigen 5 molecules and the structural basis of antigenic cross-reactivity.</title>
        <authorList>
            <person name="Hoffman D.R."/>
        </authorList>
    </citation>
    <scope>PROTEIN SEQUENCE</scope>
    <source>
        <tissue>Venom</tissue>
    </source>
</reference>
<name>VA5_VESPE</name>
<keyword id="KW-0020">Allergen</keyword>
<keyword id="KW-0903">Direct protein sequencing</keyword>
<keyword id="KW-1015">Disulfide bond</keyword>
<keyword id="KW-0964">Secreted</keyword>
<feature type="chain" id="PRO_0000211545" description="Venom allergen 5">
    <location>
        <begin position="1"/>
        <end position="204"/>
    </location>
</feature>
<feature type="domain" description="SCP">
    <location>
        <begin position="45"/>
        <end position="189"/>
    </location>
</feature>
<feature type="disulfide bond" evidence="1">
    <location>
        <begin position="4"/>
        <end position="17"/>
    </location>
</feature>
<feature type="disulfide bond" evidence="1">
    <location>
        <begin position="8"/>
        <end position="101"/>
    </location>
</feature>
<feature type="disulfide bond" evidence="1">
    <location>
        <begin position="26"/>
        <end position="94"/>
    </location>
</feature>
<feature type="disulfide bond" evidence="1">
    <location>
        <begin position="170"/>
        <end position="187"/>
    </location>
</feature>
<proteinExistence type="evidence at protein level"/>
<comment type="subcellular location">
    <subcellularLocation>
        <location>Secreted</location>
    </subcellularLocation>
</comment>
<comment type="tissue specificity">
    <text>Expressed by the venom gland.</text>
</comment>
<comment type="allergen">
    <text>Causes an allergic reaction in human.</text>
</comment>
<comment type="similarity">
    <text evidence="2">Belongs to the CRISP family. Venom allergen 5-like subfamily.</text>
</comment>
<evidence type="ECO:0000250" key="1"/>
<evidence type="ECO:0000305" key="2"/>
<sequence length="204" mass="23317">NNYCKIKCLKGGVHTACKYGSLKPNCGNKIVVSYGLTKEEKQDILKEHNDFRQKIARGLETRGNPGPQPPAKNMKNLVWNDELAYVAQVWANQCQYGHDTCRDVAKYPVGQNVALTGSTADKYDNPVKLVKMWEDEVKDYNPKKKFSENNFNKIGHYTQMVWANTKEIGCGSIKYIQNEWHKHYLVCNYGPSGNFGNEELYQTK</sequence>
<organism>
    <name type="scientific">Vespula pensylvanica</name>
    <name type="common">Western yellow jacket</name>
    <name type="synonym">Wasp</name>
    <dbReference type="NCBI Taxonomy" id="30213"/>
    <lineage>
        <taxon>Eukaryota</taxon>
        <taxon>Metazoa</taxon>
        <taxon>Ecdysozoa</taxon>
        <taxon>Arthropoda</taxon>
        <taxon>Hexapoda</taxon>
        <taxon>Insecta</taxon>
        <taxon>Pterygota</taxon>
        <taxon>Neoptera</taxon>
        <taxon>Endopterygota</taxon>
        <taxon>Hymenoptera</taxon>
        <taxon>Apocrita</taxon>
        <taxon>Aculeata</taxon>
        <taxon>Vespoidea</taxon>
        <taxon>Vespidae</taxon>
        <taxon>Vespinae</taxon>
        <taxon>Vespula</taxon>
    </lineage>
</organism>
<dbReference type="PIR" id="C44583">
    <property type="entry name" value="C44583"/>
</dbReference>
<dbReference type="SMR" id="P35785"/>
<dbReference type="Allergome" id="3517">
    <property type="allergen name" value="Ves p 5.0101"/>
</dbReference>
<dbReference type="Allergome" id="664">
    <property type="allergen name" value="Ves p 5"/>
</dbReference>
<dbReference type="GO" id="GO:0005576">
    <property type="term" value="C:extracellular region"/>
    <property type="evidence" value="ECO:0007669"/>
    <property type="project" value="UniProtKB-SubCell"/>
</dbReference>
<dbReference type="CDD" id="cd05380">
    <property type="entry name" value="CAP_euk"/>
    <property type="match status" value="1"/>
</dbReference>
<dbReference type="Gene3D" id="3.40.33.10">
    <property type="entry name" value="CAP"/>
    <property type="match status" value="1"/>
</dbReference>
<dbReference type="InterPro" id="IPR018244">
    <property type="entry name" value="Allrgn_V5/Tpx1_CS"/>
</dbReference>
<dbReference type="InterPro" id="IPR014044">
    <property type="entry name" value="CAP_dom"/>
</dbReference>
<dbReference type="InterPro" id="IPR035940">
    <property type="entry name" value="CAP_sf"/>
</dbReference>
<dbReference type="InterPro" id="IPR001283">
    <property type="entry name" value="CRISP-related"/>
</dbReference>
<dbReference type="InterPro" id="IPR002413">
    <property type="entry name" value="V5_allergen-like"/>
</dbReference>
<dbReference type="PANTHER" id="PTHR10334">
    <property type="entry name" value="CYSTEINE-RICH SECRETORY PROTEIN-RELATED"/>
    <property type="match status" value="1"/>
</dbReference>
<dbReference type="Pfam" id="PF00188">
    <property type="entry name" value="CAP"/>
    <property type="match status" value="1"/>
</dbReference>
<dbReference type="PRINTS" id="PR00838">
    <property type="entry name" value="V5ALLERGEN"/>
</dbReference>
<dbReference type="PRINTS" id="PR00837">
    <property type="entry name" value="V5TPXLIKE"/>
</dbReference>
<dbReference type="SMART" id="SM00198">
    <property type="entry name" value="SCP"/>
    <property type="match status" value="1"/>
</dbReference>
<dbReference type="SUPFAM" id="SSF55797">
    <property type="entry name" value="PR-1-like"/>
    <property type="match status" value="1"/>
</dbReference>
<dbReference type="PROSITE" id="PS01009">
    <property type="entry name" value="CRISP_1"/>
    <property type="match status" value="1"/>
</dbReference>
<dbReference type="PROSITE" id="PS01010">
    <property type="entry name" value="CRISP_2"/>
    <property type="match status" value="1"/>
</dbReference>
<protein>
    <recommendedName>
        <fullName>Venom allergen 5</fullName>
    </recommendedName>
    <alternativeName>
        <fullName>Allergen Ves p V</fullName>
    </alternativeName>
    <alternativeName>
        <fullName>Antigen 5</fullName>
        <shortName>Ag5</shortName>
    </alternativeName>
    <alternativeName>
        <fullName>Cysteine-rich venom protein</fullName>
        <shortName>CRVP</shortName>
    </alternativeName>
    <allergenName>Ves p 5</allergenName>
</protein>